<accession>P39800</accession>
<proteinExistence type="evidence at protein level"/>
<sequence>MVNIIQDFIPVGANNRPGYAMTPLYITVHNTANTAVGADAAAHARYLKNPDTTTSWHFTVDDTEIYQHLPLNENGWHAGDGNGSGNRASIGIEICENADGDFAKATANAQWLIKTLMAEHNISLANVVPHKYWSGKECPRKLLDTWDSFKAGIGGGGSQTYVVKQGDTLTSIARAFGVTVAQLQEWNNIEDPNLIRVGQVLIVSAPSAAEKPELYPLPDGIIQLTTPYTSGEHVFQVQRALAALYFYPDKGAVNNGIDGVYGPKTADAVARFQSVNGLTADGIYGPATKEKIAAQLS</sequence>
<reference key="1">
    <citation type="submission" date="1994-09" db="EMBL/GenBank/DDBJ databases">
        <authorList>
            <person name="Krogh S."/>
            <person name="Joergensen S.T."/>
            <person name="Diderichsen B."/>
            <person name="Devine K.M."/>
        </authorList>
    </citation>
    <scope>NUCLEOTIDE SEQUENCE [GENOMIC DNA]</scope>
    <source>
        <strain>168 / SO113</strain>
    </source>
</reference>
<reference key="2">
    <citation type="journal article" date="1994" name="Microbiology">
        <title>Lytic enzymes associated with defective prophages of Bacillus subtilis: sequencing and characterization of the region comprising the N-acetylmuramoyl-L-alanine amidase gene of prophage PBSX.</title>
        <authorList>
            <person name="Longchamp P.F."/>
            <person name="Mauel C."/>
            <person name="Karamata D."/>
        </authorList>
    </citation>
    <scope>NUCLEOTIDE SEQUENCE [GENOMIC DNA]</scope>
    <source>
        <strain>168</strain>
    </source>
</reference>
<reference key="3">
    <citation type="journal article" date="1998" name="J. Bacteriol.">
        <title>Lysis genes of the Bacillus subtilis defective prophage PBSX.</title>
        <authorList>
            <person name="Krogh S."/>
            <person name="Jorgensen S.T."/>
            <person name="Devine K.M."/>
        </authorList>
    </citation>
    <scope>NUCLEOTIDE SEQUENCE [GENOMIC DNA]</scope>
    <source>
        <strain>168</strain>
    </source>
</reference>
<reference key="4">
    <citation type="journal article" date="1997" name="Nature">
        <title>The complete genome sequence of the Gram-positive bacterium Bacillus subtilis.</title>
        <authorList>
            <person name="Kunst F."/>
            <person name="Ogasawara N."/>
            <person name="Moszer I."/>
            <person name="Albertini A.M."/>
            <person name="Alloni G."/>
            <person name="Azevedo V."/>
            <person name="Bertero M.G."/>
            <person name="Bessieres P."/>
            <person name="Bolotin A."/>
            <person name="Borchert S."/>
            <person name="Borriss R."/>
            <person name="Boursier L."/>
            <person name="Brans A."/>
            <person name="Braun M."/>
            <person name="Brignell S.C."/>
            <person name="Bron S."/>
            <person name="Brouillet S."/>
            <person name="Bruschi C.V."/>
            <person name="Caldwell B."/>
            <person name="Capuano V."/>
            <person name="Carter N.M."/>
            <person name="Choi S.-K."/>
            <person name="Codani J.-J."/>
            <person name="Connerton I.F."/>
            <person name="Cummings N.J."/>
            <person name="Daniel R.A."/>
            <person name="Denizot F."/>
            <person name="Devine K.M."/>
            <person name="Duesterhoeft A."/>
            <person name="Ehrlich S.D."/>
            <person name="Emmerson P.T."/>
            <person name="Entian K.-D."/>
            <person name="Errington J."/>
            <person name="Fabret C."/>
            <person name="Ferrari E."/>
            <person name="Foulger D."/>
            <person name="Fritz C."/>
            <person name="Fujita M."/>
            <person name="Fujita Y."/>
            <person name="Fuma S."/>
            <person name="Galizzi A."/>
            <person name="Galleron N."/>
            <person name="Ghim S.-Y."/>
            <person name="Glaser P."/>
            <person name="Goffeau A."/>
            <person name="Golightly E.J."/>
            <person name="Grandi G."/>
            <person name="Guiseppi G."/>
            <person name="Guy B.J."/>
            <person name="Haga K."/>
            <person name="Haiech J."/>
            <person name="Harwood C.R."/>
            <person name="Henaut A."/>
            <person name="Hilbert H."/>
            <person name="Holsappel S."/>
            <person name="Hosono S."/>
            <person name="Hullo M.-F."/>
            <person name="Itaya M."/>
            <person name="Jones L.-M."/>
            <person name="Joris B."/>
            <person name="Karamata D."/>
            <person name="Kasahara Y."/>
            <person name="Klaerr-Blanchard M."/>
            <person name="Klein C."/>
            <person name="Kobayashi Y."/>
            <person name="Koetter P."/>
            <person name="Koningstein G."/>
            <person name="Krogh S."/>
            <person name="Kumano M."/>
            <person name="Kurita K."/>
            <person name="Lapidus A."/>
            <person name="Lardinois S."/>
            <person name="Lauber J."/>
            <person name="Lazarevic V."/>
            <person name="Lee S.-M."/>
            <person name="Levine A."/>
            <person name="Liu H."/>
            <person name="Masuda S."/>
            <person name="Mauel C."/>
            <person name="Medigue C."/>
            <person name="Medina N."/>
            <person name="Mellado R.P."/>
            <person name="Mizuno M."/>
            <person name="Moestl D."/>
            <person name="Nakai S."/>
            <person name="Noback M."/>
            <person name="Noone D."/>
            <person name="O'Reilly M."/>
            <person name="Ogawa K."/>
            <person name="Ogiwara A."/>
            <person name="Oudega B."/>
            <person name="Park S.-H."/>
            <person name="Parro V."/>
            <person name="Pohl T.M."/>
            <person name="Portetelle D."/>
            <person name="Porwollik S."/>
            <person name="Prescott A.M."/>
            <person name="Presecan E."/>
            <person name="Pujic P."/>
            <person name="Purnelle B."/>
            <person name="Rapoport G."/>
            <person name="Rey M."/>
            <person name="Reynolds S."/>
            <person name="Rieger M."/>
            <person name="Rivolta C."/>
            <person name="Rocha E."/>
            <person name="Roche B."/>
            <person name="Rose M."/>
            <person name="Sadaie Y."/>
            <person name="Sato T."/>
            <person name="Scanlan E."/>
            <person name="Schleich S."/>
            <person name="Schroeter R."/>
            <person name="Scoffone F."/>
            <person name="Sekiguchi J."/>
            <person name="Sekowska A."/>
            <person name="Seror S.J."/>
            <person name="Serror P."/>
            <person name="Shin B.-S."/>
            <person name="Soldo B."/>
            <person name="Sorokin A."/>
            <person name="Tacconi E."/>
            <person name="Takagi T."/>
            <person name="Takahashi H."/>
            <person name="Takemaru K."/>
            <person name="Takeuchi M."/>
            <person name="Tamakoshi A."/>
            <person name="Tanaka T."/>
            <person name="Terpstra P."/>
            <person name="Tognoni A."/>
            <person name="Tosato V."/>
            <person name="Uchiyama S."/>
            <person name="Vandenbol M."/>
            <person name="Vannier F."/>
            <person name="Vassarotti A."/>
            <person name="Viari A."/>
            <person name="Wambutt R."/>
            <person name="Wedler E."/>
            <person name="Wedler H."/>
            <person name="Weitzenegger T."/>
            <person name="Winters P."/>
            <person name="Wipat A."/>
            <person name="Yamamoto H."/>
            <person name="Yamane K."/>
            <person name="Yasumoto K."/>
            <person name="Yata K."/>
            <person name="Yoshida K."/>
            <person name="Yoshikawa H.-F."/>
            <person name="Zumstein E."/>
            <person name="Yoshikawa H."/>
            <person name="Danchin A."/>
        </authorList>
    </citation>
    <scope>NUCLEOTIDE SEQUENCE [LARGE SCALE GENOMIC DNA]</scope>
    <source>
        <strain>168</strain>
    </source>
</reference>
<reference key="5">
    <citation type="submission" date="1997-11" db="EMBL/GenBank/DDBJ databases">
        <title>Sequence of the Bacillus subtilis genome between xlyA and ykoR.</title>
        <authorList>
            <person name="Devine K.M."/>
        </authorList>
    </citation>
    <scope>NUCLEOTIDE SEQUENCE [GENOMIC DNA] OF 195-297</scope>
    <source>
        <strain>168</strain>
    </source>
</reference>
<name>XLYA_BACSU</name>
<keyword id="KW-0002">3D-structure</keyword>
<keyword id="KW-0961">Cell wall biogenesis/degradation</keyword>
<keyword id="KW-0178">Competence</keyword>
<keyword id="KW-0378">Hydrolase</keyword>
<keyword id="KW-1185">Reference proteome</keyword>
<keyword id="KW-0964">Secreted</keyword>
<keyword id="KW-0732">Signal</keyword>
<keyword id="KW-0749">Sporulation</keyword>
<organism>
    <name type="scientific">Bacillus subtilis (strain 168)</name>
    <dbReference type="NCBI Taxonomy" id="224308"/>
    <lineage>
        <taxon>Bacteria</taxon>
        <taxon>Bacillati</taxon>
        <taxon>Bacillota</taxon>
        <taxon>Bacilli</taxon>
        <taxon>Bacillales</taxon>
        <taxon>Bacillaceae</taxon>
        <taxon>Bacillus</taxon>
    </lineage>
</organism>
<dbReference type="EC" id="3.5.1.28"/>
<dbReference type="EMBL" id="Z36941">
    <property type="protein sequence ID" value="CAA85403.1"/>
    <property type="molecule type" value="Genomic_DNA"/>
</dbReference>
<dbReference type="EMBL" id="L25924">
    <property type="protein sequence ID" value="AAA22645.1"/>
    <property type="molecule type" value="Genomic_DNA"/>
</dbReference>
<dbReference type="EMBL" id="Z70177">
    <property type="protein sequence ID" value="CAA94049.1"/>
    <property type="molecule type" value="Genomic_DNA"/>
</dbReference>
<dbReference type="EMBL" id="AL009126">
    <property type="protein sequence ID" value="CAB13138.1"/>
    <property type="molecule type" value="Genomic_DNA"/>
</dbReference>
<dbReference type="EMBL" id="AJ002571">
    <property type="protein sequence ID" value="CAA05561.1"/>
    <property type="molecule type" value="Genomic_DNA"/>
</dbReference>
<dbReference type="PIR" id="I39938">
    <property type="entry name" value="I39938"/>
</dbReference>
<dbReference type="RefSeq" id="NP_389164.1">
    <property type="nucleotide sequence ID" value="NC_000964.3"/>
</dbReference>
<dbReference type="RefSeq" id="WP_003245230.1">
    <property type="nucleotide sequence ID" value="NZ_OZ025638.1"/>
</dbReference>
<dbReference type="PDB" id="3HMB">
    <property type="method" value="X-ray"/>
    <property type="resolution" value="2.70 A"/>
    <property type="chains" value="A/B/C=1-154"/>
</dbReference>
<dbReference type="PDB" id="3RDR">
    <property type="method" value="X-ray"/>
    <property type="resolution" value="2.20 A"/>
    <property type="chains" value="A=1-154"/>
</dbReference>
<dbReference type="PDBsum" id="3HMB"/>
<dbReference type="PDBsum" id="3RDR"/>
<dbReference type="SMR" id="P39800"/>
<dbReference type="FunCoup" id="P39800">
    <property type="interactions" value="35"/>
</dbReference>
<dbReference type="STRING" id="224308.BSU12810"/>
<dbReference type="PaxDb" id="224308-BSU12810"/>
<dbReference type="EnsemblBacteria" id="CAB13138">
    <property type="protein sequence ID" value="CAB13138"/>
    <property type="gene ID" value="BSU_12810"/>
</dbReference>
<dbReference type="GeneID" id="939869"/>
<dbReference type="KEGG" id="bsu:BSU12810"/>
<dbReference type="PATRIC" id="fig|224308.179.peg.1389"/>
<dbReference type="eggNOG" id="COG3409">
    <property type="taxonomic scope" value="Bacteria"/>
</dbReference>
<dbReference type="eggNOG" id="COG5632">
    <property type="taxonomic scope" value="Bacteria"/>
</dbReference>
<dbReference type="InParanoid" id="P39800"/>
<dbReference type="OrthoDB" id="9794294at2"/>
<dbReference type="PhylomeDB" id="P39800"/>
<dbReference type="BioCyc" id="BSUB:BSU12810-MONOMER"/>
<dbReference type="EvolutionaryTrace" id="P39800"/>
<dbReference type="Proteomes" id="UP000001570">
    <property type="component" value="Chromosome"/>
</dbReference>
<dbReference type="GO" id="GO:0005576">
    <property type="term" value="C:extracellular region"/>
    <property type="evidence" value="ECO:0007669"/>
    <property type="project" value="UniProtKB-SubCell"/>
</dbReference>
<dbReference type="GO" id="GO:0008745">
    <property type="term" value="F:N-acetylmuramoyl-L-alanine amidase activity"/>
    <property type="evidence" value="ECO:0000318"/>
    <property type="project" value="GO_Central"/>
</dbReference>
<dbReference type="GO" id="GO:0071555">
    <property type="term" value="P:cell wall organization"/>
    <property type="evidence" value="ECO:0007669"/>
    <property type="project" value="UniProtKB-KW"/>
</dbReference>
<dbReference type="GO" id="GO:0030420">
    <property type="term" value="P:establishment of competence for transformation"/>
    <property type="evidence" value="ECO:0007669"/>
    <property type="project" value="UniProtKB-KW"/>
</dbReference>
<dbReference type="GO" id="GO:0009253">
    <property type="term" value="P:peptidoglycan catabolic process"/>
    <property type="evidence" value="ECO:0000318"/>
    <property type="project" value="GO_Central"/>
</dbReference>
<dbReference type="GO" id="GO:0009254">
    <property type="term" value="P:peptidoglycan turnover"/>
    <property type="evidence" value="ECO:0000318"/>
    <property type="project" value="GO_Central"/>
</dbReference>
<dbReference type="GO" id="GO:0030435">
    <property type="term" value="P:sporulation resulting in formation of a cellular spore"/>
    <property type="evidence" value="ECO:0007669"/>
    <property type="project" value="UniProtKB-KW"/>
</dbReference>
<dbReference type="CDD" id="cd00118">
    <property type="entry name" value="LysM"/>
    <property type="match status" value="1"/>
</dbReference>
<dbReference type="CDD" id="cd06583">
    <property type="entry name" value="PGRP"/>
    <property type="match status" value="1"/>
</dbReference>
<dbReference type="FunFam" id="3.40.80.10:FF:000007">
    <property type="entry name" value="N-acetylmuramoyl-L-alanine amidase XlyA"/>
    <property type="match status" value="1"/>
</dbReference>
<dbReference type="Gene3D" id="3.10.350.10">
    <property type="entry name" value="LysM domain"/>
    <property type="match status" value="1"/>
</dbReference>
<dbReference type="Gene3D" id="3.40.80.10">
    <property type="entry name" value="Peptidoglycan recognition protein-like"/>
    <property type="match status" value="1"/>
</dbReference>
<dbReference type="Gene3D" id="1.10.101.10">
    <property type="entry name" value="PGBD-like superfamily/PGBD"/>
    <property type="match status" value="1"/>
</dbReference>
<dbReference type="InterPro" id="IPR036505">
    <property type="entry name" value="Amidase/PGRP_sf"/>
</dbReference>
<dbReference type="InterPro" id="IPR002502">
    <property type="entry name" value="Amidase_domain"/>
</dbReference>
<dbReference type="InterPro" id="IPR018392">
    <property type="entry name" value="LysM_dom"/>
</dbReference>
<dbReference type="InterPro" id="IPR036779">
    <property type="entry name" value="LysM_dom_sf"/>
</dbReference>
<dbReference type="InterPro" id="IPR051206">
    <property type="entry name" value="NAMLAA_amidase_2"/>
</dbReference>
<dbReference type="InterPro" id="IPR002477">
    <property type="entry name" value="Peptidoglycan-bd-like"/>
</dbReference>
<dbReference type="InterPro" id="IPR036365">
    <property type="entry name" value="PGBD-like_sf"/>
</dbReference>
<dbReference type="InterPro" id="IPR036366">
    <property type="entry name" value="PGBDSf"/>
</dbReference>
<dbReference type="PANTHER" id="PTHR30417">
    <property type="entry name" value="N-ACETYLMURAMOYL-L-ALANINE AMIDASE AMID"/>
    <property type="match status" value="1"/>
</dbReference>
<dbReference type="PANTHER" id="PTHR30417:SF11">
    <property type="entry name" value="N-ACETYLMURAMOYL-L-ALANINE AMIDASE XLYA"/>
    <property type="match status" value="1"/>
</dbReference>
<dbReference type="Pfam" id="PF01510">
    <property type="entry name" value="Amidase_2"/>
    <property type="match status" value="1"/>
</dbReference>
<dbReference type="Pfam" id="PF01476">
    <property type="entry name" value="LysM"/>
    <property type="match status" value="1"/>
</dbReference>
<dbReference type="Pfam" id="PF01471">
    <property type="entry name" value="PG_binding_1"/>
    <property type="match status" value="1"/>
</dbReference>
<dbReference type="SMART" id="SM00644">
    <property type="entry name" value="Ami_2"/>
    <property type="match status" value="1"/>
</dbReference>
<dbReference type="SMART" id="SM00257">
    <property type="entry name" value="LysM"/>
    <property type="match status" value="1"/>
</dbReference>
<dbReference type="SUPFAM" id="SSF54106">
    <property type="entry name" value="LysM domain"/>
    <property type="match status" value="1"/>
</dbReference>
<dbReference type="SUPFAM" id="SSF55846">
    <property type="entry name" value="N-acetylmuramoyl-L-alanine amidase-like"/>
    <property type="match status" value="1"/>
</dbReference>
<dbReference type="SUPFAM" id="SSF47090">
    <property type="entry name" value="PGBD-like"/>
    <property type="match status" value="1"/>
</dbReference>
<dbReference type="PROSITE" id="PS51782">
    <property type="entry name" value="LYSM"/>
    <property type="match status" value="1"/>
</dbReference>
<protein>
    <recommendedName>
        <fullName>N-acetylmuramoyl-L-alanine amidase XlyA</fullName>
        <ecNumber>3.5.1.28</ecNumber>
    </recommendedName>
    <alternativeName>
        <fullName>Autolysin</fullName>
    </alternativeName>
    <alternativeName>
        <fullName>Cell wall hydrolase</fullName>
    </alternativeName>
</protein>
<comment type="function">
    <text>Autolysins are involved in some important biological processes such as cell separation, cell-wall turnover, competence for genetic transformation, formation of the flagella and sporulation.</text>
</comment>
<comment type="catalytic activity">
    <reaction>
        <text>Hydrolyzes the link between N-acetylmuramoyl residues and L-amino acid residues in certain cell-wall glycopeptides.</text>
        <dbReference type="EC" id="3.5.1.28"/>
    </reaction>
</comment>
<comment type="subcellular location">
    <subcellularLocation>
        <location evidence="3">Secreted</location>
    </subcellularLocation>
</comment>
<comment type="similarity">
    <text evidence="3">Belongs to the N-acetylmuramoyl-L-alanine amidase 2 family.</text>
</comment>
<evidence type="ECO:0000255" key="1"/>
<evidence type="ECO:0000255" key="2">
    <source>
        <dbReference type="PROSITE-ProRule" id="PRU01118"/>
    </source>
</evidence>
<evidence type="ECO:0000305" key="3"/>
<evidence type="ECO:0007829" key="4">
    <source>
        <dbReference type="PDB" id="3RDR"/>
    </source>
</evidence>
<gene>
    <name type="primary">xlyA</name>
    <name type="ordered locus">BSU12810</name>
</gene>
<feature type="signal peptide" evidence="1">
    <location>
        <begin position="1"/>
        <end position="44"/>
    </location>
</feature>
<feature type="chain" id="PRO_0000006457" description="N-acetylmuramoyl-L-alanine amidase XlyA">
    <location>
        <begin position="45"/>
        <end position="297"/>
    </location>
</feature>
<feature type="domain" description="N-acetylmuramoyl-L-alanine amidase" evidence="1">
    <location>
        <begin position="45"/>
        <end position="140"/>
    </location>
</feature>
<feature type="domain" description="LysM" evidence="2">
    <location>
        <begin position="159"/>
        <end position="203"/>
    </location>
</feature>
<feature type="strand" evidence="4">
    <location>
        <begin position="4"/>
        <end position="6"/>
    </location>
</feature>
<feature type="strand" evidence="4">
    <location>
        <begin position="25"/>
        <end position="30"/>
    </location>
</feature>
<feature type="helix" evidence="4">
    <location>
        <begin position="40"/>
        <end position="47"/>
    </location>
</feature>
<feature type="strand" evidence="4">
    <location>
        <begin position="57"/>
        <end position="60"/>
    </location>
</feature>
<feature type="strand" evidence="4">
    <location>
        <begin position="65"/>
        <end position="67"/>
    </location>
</feature>
<feature type="strand" evidence="4">
    <location>
        <begin position="78"/>
        <end position="80"/>
    </location>
</feature>
<feature type="helix" evidence="4">
    <location>
        <begin position="84"/>
        <end position="87"/>
    </location>
</feature>
<feature type="strand" evidence="4">
    <location>
        <begin position="88"/>
        <end position="94"/>
    </location>
</feature>
<feature type="helix" evidence="4">
    <location>
        <begin position="102"/>
        <end position="119"/>
    </location>
</feature>
<feature type="helix" evidence="4">
    <location>
        <begin position="124"/>
        <end position="126"/>
    </location>
</feature>
<feature type="strand" evidence="4">
    <location>
        <begin position="127"/>
        <end position="129"/>
    </location>
</feature>
<feature type="helix" evidence="4">
    <location>
        <begin position="130"/>
        <end position="134"/>
    </location>
</feature>
<feature type="turn" evidence="4">
    <location>
        <begin position="140"/>
        <end position="142"/>
    </location>
</feature>
<feature type="helix" evidence="4">
    <location>
        <begin position="143"/>
        <end position="145"/>
    </location>
</feature>
<feature type="helix" evidence="4">
    <location>
        <begin position="146"/>
        <end position="151"/>
    </location>
</feature>